<keyword id="KW-0648">Protein biosynthesis</keyword>
<keyword id="KW-1185">Reference proteome</keyword>
<keyword id="KW-0808">Transferase</keyword>
<reference key="1">
    <citation type="submission" date="2005-08" db="EMBL/GenBank/DDBJ databases">
        <title>Complete sequence of chromosome 1 of Nitrosospira multiformis ATCC 25196.</title>
        <authorList>
            <person name="Copeland A."/>
            <person name="Lucas S."/>
            <person name="Lapidus A."/>
            <person name="Barry K."/>
            <person name="Detter J.C."/>
            <person name="Glavina T."/>
            <person name="Hammon N."/>
            <person name="Israni S."/>
            <person name="Pitluck S."/>
            <person name="Chain P."/>
            <person name="Malfatti S."/>
            <person name="Shin M."/>
            <person name="Vergez L."/>
            <person name="Schmutz J."/>
            <person name="Larimer F."/>
            <person name="Land M."/>
            <person name="Hauser L."/>
            <person name="Kyrpides N."/>
            <person name="Lykidis A."/>
            <person name="Richardson P."/>
        </authorList>
    </citation>
    <scope>NUCLEOTIDE SEQUENCE [LARGE SCALE GENOMIC DNA]</scope>
    <source>
        <strain>ATCC 25196 / NCIMB 11849 / C 71</strain>
    </source>
</reference>
<protein>
    <recommendedName>
        <fullName evidence="1">Methionyl-tRNA formyltransferase</fullName>
        <ecNumber evidence="1">2.1.2.9</ecNumber>
    </recommendedName>
</protein>
<comment type="function">
    <text evidence="1">Attaches a formyl group to the free amino group of methionyl-tRNA(fMet). The formyl group appears to play a dual role in the initiator identity of N-formylmethionyl-tRNA by promoting its recognition by IF2 and preventing the misappropriation of this tRNA by the elongation apparatus.</text>
</comment>
<comment type="catalytic activity">
    <reaction evidence="1">
        <text>L-methionyl-tRNA(fMet) + (6R)-10-formyltetrahydrofolate = N-formyl-L-methionyl-tRNA(fMet) + (6S)-5,6,7,8-tetrahydrofolate + H(+)</text>
        <dbReference type="Rhea" id="RHEA:24380"/>
        <dbReference type="Rhea" id="RHEA-COMP:9952"/>
        <dbReference type="Rhea" id="RHEA-COMP:9953"/>
        <dbReference type="ChEBI" id="CHEBI:15378"/>
        <dbReference type="ChEBI" id="CHEBI:57453"/>
        <dbReference type="ChEBI" id="CHEBI:78530"/>
        <dbReference type="ChEBI" id="CHEBI:78844"/>
        <dbReference type="ChEBI" id="CHEBI:195366"/>
        <dbReference type="EC" id="2.1.2.9"/>
    </reaction>
</comment>
<comment type="similarity">
    <text evidence="1">Belongs to the Fmt family.</text>
</comment>
<sequence>MRIIFAGTPPFAAAALEALADAGHEIALVLTQPDRPAGRGMKNASSAVKLLAQKRGFGLLQPPSLRQPELHMQLEAVRADIMVVAAYGLILPFSVLNIPKLGCVNIHASLLPRWRGAAPIERAILAGDRETGITIMQMDRGLDTGPILLVRSITIAKDDTAGTLHEKLGQLGAACIVEALALLQQGKIIATPQNDLAATYASKLEKTEAEIDWRMDAENIDRAVRAFNPRPGMHSTVNGISMKVWQTSVDIAETDEKPGEIVAIRPDGIVVACGKHALILKIVQKSGGKKLRSAEFLLGHSLHPHDRFESGE</sequence>
<gene>
    <name evidence="1" type="primary">fmt</name>
    <name type="ordered locus">Nmul_A0393</name>
</gene>
<organism>
    <name type="scientific">Nitrosospira multiformis (strain ATCC 25196 / NCIMB 11849 / C 71)</name>
    <dbReference type="NCBI Taxonomy" id="323848"/>
    <lineage>
        <taxon>Bacteria</taxon>
        <taxon>Pseudomonadati</taxon>
        <taxon>Pseudomonadota</taxon>
        <taxon>Betaproteobacteria</taxon>
        <taxon>Nitrosomonadales</taxon>
        <taxon>Nitrosomonadaceae</taxon>
        <taxon>Nitrosospira</taxon>
    </lineage>
</organism>
<accession>Q2YC20</accession>
<feature type="chain" id="PRO_1000020111" description="Methionyl-tRNA formyltransferase">
    <location>
        <begin position="1"/>
        <end position="312"/>
    </location>
</feature>
<feature type="binding site" evidence="1">
    <location>
        <begin position="109"/>
        <end position="112"/>
    </location>
    <ligand>
        <name>(6S)-5,6,7,8-tetrahydrofolate</name>
        <dbReference type="ChEBI" id="CHEBI:57453"/>
    </ligand>
</feature>
<name>FMT_NITMU</name>
<proteinExistence type="inferred from homology"/>
<evidence type="ECO:0000255" key="1">
    <source>
        <dbReference type="HAMAP-Rule" id="MF_00182"/>
    </source>
</evidence>
<dbReference type="EC" id="2.1.2.9" evidence="1"/>
<dbReference type="EMBL" id="CP000103">
    <property type="protein sequence ID" value="ABB73701.1"/>
    <property type="molecule type" value="Genomic_DNA"/>
</dbReference>
<dbReference type="RefSeq" id="WP_011379755.1">
    <property type="nucleotide sequence ID" value="NC_007614.1"/>
</dbReference>
<dbReference type="SMR" id="Q2YC20"/>
<dbReference type="STRING" id="323848.Nmul_A0393"/>
<dbReference type="KEGG" id="nmu:Nmul_A0393"/>
<dbReference type="eggNOG" id="COG0223">
    <property type="taxonomic scope" value="Bacteria"/>
</dbReference>
<dbReference type="HOGENOM" id="CLU_033347_1_2_4"/>
<dbReference type="OrthoDB" id="9802815at2"/>
<dbReference type="Proteomes" id="UP000002718">
    <property type="component" value="Chromosome"/>
</dbReference>
<dbReference type="GO" id="GO:0005829">
    <property type="term" value="C:cytosol"/>
    <property type="evidence" value="ECO:0007669"/>
    <property type="project" value="TreeGrafter"/>
</dbReference>
<dbReference type="GO" id="GO:0004479">
    <property type="term" value="F:methionyl-tRNA formyltransferase activity"/>
    <property type="evidence" value="ECO:0007669"/>
    <property type="project" value="UniProtKB-UniRule"/>
</dbReference>
<dbReference type="CDD" id="cd08646">
    <property type="entry name" value="FMT_core_Met-tRNA-FMT_N"/>
    <property type="match status" value="1"/>
</dbReference>
<dbReference type="CDD" id="cd08704">
    <property type="entry name" value="Met_tRNA_FMT_C"/>
    <property type="match status" value="1"/>
</dbReference>
<dbReference type="FunFam" id="3.40.50.12230:FF:000001">
    <property type="entry name" value="Methionyl-tRNA formyltransferase"/>
    <property type="match status" value="1"/>
</dbReference>
<dbReference type="Gene3D" id="3.40.50.12230">
    <property type="match status" value="1"/>
</dbReference>
<dbReference type="HAMAP" id="MF_00182">
    <property type="entry name" value="Formyl_trans"/>
    <property type="match status" value="1"/>
</dbReference>
<dbReference type="InterPro" id="IPR005794">
    <property type="entry name" value="Fmt"/>
</dbReference>
<dbReference type="InterPro" id="IPR005793">
    <property type="entry name" value="Formyl_trans_C"/>
</dbReference>
<dbReference type="InterPro" id="IPR002376">
    <property type="entry name" value="Formyl_transf_N"/>
</dbReference>
<dbReference type="InterPro" id="IPR036477">
    <property type="entry name" value="Formyl_transf_N_sf"/>
</dbReference>
<dbReference type="InterPro" id="IPR011034">
    <property type="entry name" value="Formyl_transferase-like_C_sf"/>
</dbReference>
<dbReference type="InterPro" id="IPR044135">
    <property type="entry name" value="Met-tRNA-FMT_C"/>
</dbReference>
<dbReference type="InterPro" id="IPR041711">
    <property type="entry name" value="Met-tRNA-FMT_N"/>
</dbReference>
<dbReference type="NCBIfam" id="TIGR00460">
    <property type="entry name" value="fmt"/>
    <property type="match status" value="1"/>
</dbReference>
<dbReference type="PANTHER" id="PTHR11138">
    <property type="entry name" value="METHIONYL-TRNA FORMYLTRANSFERASE"/>
    <property type="match status" value="1"/>
</dbReference>
<dbReference type="PANTHER" id="PTHR11138:SF5">
    <property type="entry name" value="METHIONYL-TRNA FORMYLTRANSFERASE, MITOCHONDRIAL"/>
    <property type="match status" value="1"/>
</dbReference>
<dbReference type="Pfam" id="PF02911">
    <property type="entry name" value="Formyl_trans_C"/>
    <property type="match status" value="1"/>
</dbReference>
<dbReference type="Pfam" id="PF00551">
    <property type="entry name" value="Formyl_trans_N"/>
    <property type="match status" value="1"/>
</dbReference>
<dbReference type="SUPFAM" id="SSF50486">
    <property type="entry name" value="FMT C-terminal domain-like"/>
    <property type="match status" value="1"/>
</dbReference>
<dbReference type="SUPFAM" id="SSF53328">
    <property type="entry name" value="Formyltransferase"/>
    <property type="match status" value="1"/>
</dbReference>